<reference key="1">
    <citation type="journal article" date="2007" name="Genome Biol.">
        <title>Genome analysis and genome-wide proteomics of Thermococcus gammatolerans, the most radioresistant organism known amongst the Archaea.</title>
        <authorList>
            <person name="Zivanovic Y."/>
            <person name="Armengaud J."/>
            <person name="Lagorce A."/>
            <person name="Leplat C."/>
            <person name="Guerin P."/>
            <person name="Dutertre M."/>
            <person name="Anthouard V."/>
            <person name="Forterre P."/>
            <person name="Wincker P."/>
            <person name="Confalonieri F."/>
        </authorList>
    </citation>
    <scope>NUCLEOTIDE SEQUENCE [LARGE SCALE GENOMIC DNA]</scope>
    <source>
        <strain>DSM 15229 / JCM 11827 / EJ3</strain>
    </source>
</reference>
<protein>
    <recommendedName>
        <fullName evidence="1">Histidinol-phosphate aminotransferase</fullName>
        <ecNumber evidence="1">2.6.1.9</ecNumber>
    </recommendedName>
    <alternativeName>
        <fullName evidence="1">Imidazole acetol-phosphate transaminase</fullName>
    </alternativeName>
</protein>
<feature type="chain" id="PRO_1000213311" description="Histidinol-phosphate aminotransferase">
    <location>
        <begin position="1"/>
        <end position="340"/>
    </location>
</feature>
<feature type="modified residue" description="N6-(pyridoxal phosphate)lysine" evidence="1">
    <location>
        <position position="204"/>
    </location>
</feature>
<organism>
    <name type="scientific">Thermococcus gammatolerans (strain DSM 15229 / JCM 11827 / EJ3)</name>
    <dbReference type="NCBI Taxonomy" id="593117"/>
    <lineage>
        <taxon>Archaea</taxon>
        <taxon>Methanobacteriati</taxon>
        <taxon>Methanobacteriota</taxon>
        <taxon>Thermococci</taxon>
        <taxon>Thermococcales</taxon>
        <taxon>Thermococcaceae</taxon>
        <taxon>Thermococcus</taxon>
    </lineage>
</organism>
<comment type="catalytic activity">
    <reaction evidence="1">
        <text>L-histidinol phosphate + 2-oxoglutarate = 3-(imidazol-4-yl)-2-oxopropyl phosphate + L-glutamate</text>
        <dbReference type="Rhea" id="RHEA:23744"/>
        <dbReference type="ChEBI" id="CHEBI:16810"/>
        <dbReference type="ChEBI" id="CHEBI:29985"/>
        <dbReference type="ChEBI" id="CHEBI:57766"/>
        <dbReference type="ChEBI" id="CHEBI:57980"/>
        <dbReference type="EC" id="2.6.1.9"/>
    </reaction>
</comment>
<comment type="cofactor">
    <cofactor evidence="1">
        <name>pyridoxal 5'-phosphate</name>
        <dbReference type="ChEBI" id="CHEBI:597326"/>
    </cofactor>
</comment>
<comment type="pathway">
    <text evidence="1">Amino-acid biosynthesis; L-histidine biosynthesis; L-histidine from 5-phospho-alpha-D-ribose 1-diphosphate: step 7/9.</text>
</comment>
<comment type="similarity">
    <text evidence="1">Belongs to the class-II pyridoxal-phosphate-dependent aminotransferase family. Histidinol-phosphate aminotransferase subfamily.</text>
</comment>
<gene>
    <name evidence="1" type="primary">hisC</name>
    <name type="ordered locus">TGAM_1614</name>
</gene>
<name>HIS8_THEGJ</name>
<proteinExistence type="inferred from homology"/>
<accession>C5A7A4</accession>
<evidence type="ECO:0000255" key="1">
    <source>
        <dbReference type="HAMAP-Rule" id="MF_01023"/>
    </source>
</evidence>
<keyword id="KW-0028">Amino-acid biosynthesis</keyword>
<keyword id="KW-0032">Aminotransferase</keyword>
<keyword id="KW-0368">Histidine biosynthesis</keyword>
<keyword id="KW-0663">Pyridoxal phosphate</keyword>
<keyword id="KW-1185">Reference proteome</keyword>
<keyword id="KW-0808">Transferase</keyword>
<dbReference type="EC" id="2.6.1.9" evidence="1"/>
<dbReference type="EMBL" id="CP001398">
    <property type="protein sequence ID" value="ACS34116.1"/>
    <property type="molecule type" value="Genomic_DNA"/>
</dbReference>
<dbReference type="RefSeq" id="WP_015859227.1">
    <property type="nucleotide sequence ID" value="NC_012804.1"/>
</dbReference>
<dbReference type="SMR" id="C5A7A4"/>
<dbReference type="STRING" id="593117.TGAM_1614"/>
<dbReference type="PaxDb" id="593117-TGAM_1614"/>
<dbReference type="GeneID" id="7988508"/>
<dbReference type="KEGG" id="tga:TGAM_1614"/>
<dbReference type="PATRIC" id="fig|593117.10.peg.1618"/>
<dbReference type="eggNOG" id="arCOG04273">
    <property type="taxonomic scope" value="Archaea"/>
</dbReference>
<dbReference type="HOGENOM" id="CLU_017584_3_1_2"/>
<dbReference type="OrthoDB" id="9929at2157"/>
<dbReference type="UniPathway" id="UPA00031">
    <property type="reaction ID" value="UER00012"/>
</dbReference>
<dbReference type="Proteomes" id="UP000001488">
    <property type="component" value="Chromosome"/>
</dbReference>
<dbReference type="GO" id="GO:0004400">
    <property type="term" value="F:histidinol-phosphate transaminase activity"/>
    <property type="evidence" value="ECO:0007669"/>
    <property type="project" value="UniProtKB-UniRule"/>
</dbReference>
<dbReference type="GO" id="GO:0030170">
    <property type="term" value="F:pyridoxal phosphate binding"/>
    <property type="evidence" value="ECO:0007669"/>
    <property type="project" value="InterPro"/>
</dbReference>
<dbReference type="GO" id="GO:0000105">
    <property type="term" value="P:L-histidine biosynthetic process"/>
    <property type="evidence" value="ECO:0007669"/>
    <property type="project" value="UniProtKB-UniRule"/>
</dbReference>
<dbReference type="CDD" id="cd00609">
    <property type="entry name" value="AAT_like"/>
    <property type="match status" value="1"/>
</dbReference>
<dbReference type="Gene3D" id="3.90.1150.10">
    <property type="entry name" value="Aspartate Aminotransferase, domain 1"/>
    <property type="match status" value="1"/>
</dbReference>
<dbReference type="Gene3D" id="3.40.640.10">
    <property type="entry name" value="Type I PLP-dependent aspartate aminotransferase-like (Major domain)"/>
    <property type="match status" value="1"/>
</dbReference>
<dbReference type="HAMAP" id="MF_01023">
    <property type="entry name" value="HisC_aminotrans_2"/>
    <property type="match status" value="1"/>
</dbReference>
<dbReference type="InterPro" id="IPR001917">
    <property type="entry name" value="Aminotrans_II_pyridoxalP_BS"/>
</dbReference>
<dbReference type="InterPro" id="IPR004839">
    <property type="entry name" value="Aminotransferase_I/II_large"/>
</dbReference>
<dbReference type="InterPro" id="IPR005861">
    <property type="entry name" value="HisP_aminotrans"/>
</dbReference>
<dbReference type="InterPro" id="IPR015424">
    <property type="entry name" value="PyrdxlP-dep_Trfase"/>
</dbReference>
<dbReference type="InterPro" id="IPR015421">
    <property type="entry name" value="PyrdxlP-dep_Trfase_major"/>
</dbReference>
<dbReference type="InterPro" id="IPR015422">
    <property type="entry name" value="PyrdxlP-dep_Trfase_small"/>
</dbReference>
<dbReference type="NCBIfam" id="TIGR01141">
    <property type="entry name" value="hisC"/>
    <property type="match status" value="1"/>
</dbReference>
<dbReference type="PANTHER" id="PTHR42885:SF2">
    <property type="entry name" value="HISTIDINOL-PHOSPHATE AMINOTRANSFERASE"/>
    <property type="match status" value="1"/>
</dbReference>
<dbReference type="PANTHER" id="PTHR42885">
    <property type="entry name" value="HISTIDINOL-PHOSPHATE AMINOTRANSFERASE-RELATED"/>
    <property type="match status" value="1"/>
</dbReference>
<dbReference type="Pfam" id="PF00155">
    <property type="entry name" value="Aminotran_1_2"/>
    <property type="match status" value="1"/>
</dbReference>
<dbReference type="SUPFAM" id="SSF53383">
    <property type="entry name" value="PLP-dependent transferases"/>
    <property type="match status" value="1"/>
</dbReference>
<dbReference type="PROSITE" id="PS00599">
    <property type="entry name" value="AA_TRANSFER_CLASS_2"/>
    <property type="match status" value="1"/>
</dbReference>
<sequence length="340" mass="38488">MISELVKSFQPYRVVEGNYRIRLDKNENPYDLPGEVKEEIFEELREVSFNRYPHITSMPAREAIADFYGVSPDNVAVGNGSDELLSYLVRLFEGNHIVITPPTFGMYSFYAKLNGVPVVEVPLREDFTLDGEAVAEKAKNARVVFIASPNNPTGNLQPEEEIIRVLETRRPVVLDEAYAEFVGKSLWRLIEEYPNLVVLRTFSKAFGMAGIRAGYMLAGEEIVDALYRIKSPFSVGIMTMTAIRVALRHADLMEKTVRKIVEERERMRRKLGELAYPSDANFLLVRLNAYEELLKRGIVVRKLSGRLEGHIRVTVGRRWENDAFLEAVEEIAGGESVGGL</sequence>